<sequence>MTILRKSHPLLKMVNHAFIDLPAPSNISGWWNFGSLLGLCLIIQIASGLFLAMHYTSDTISAFSSVAHICRDVNYGWLIRYIHANGASLFFMCLYLHIGRGIYYGSYMYKETWNIGIMLLFLTMATAFMGYVLPWGQMSFWGATVITNLLSAIPYVGTNLVEWIWGGFSVDKATLTRFFAFHFILPFIIAATAMVHLLFLHETGSNNPLGIPSDSDKIPFHPYYTFKDFLGVIIILASFLTFVLFFPDLLGDPDNYSPANPLNTPPHIKPEWYFLFAYAILRSIPNKLGGVIALVLSILVLALFPLLHTANQRSMMFRPISQFLFWTLVSDLFILTWIGGQPVEPPFIIIGQIASILYFSIILVLLPIAGLIENKILKW</sequence>
<protein>
    <recommendedName>
        <fullName>Cytochrome b</fullName>
    </recommendedName>
    <alternativeName>
        <fullName>Complex III subunit 3</fullName>
    </alternativeName>
    <alternativeName>
        <fullName>Complex III subunit III</fullName>
    </alternativeName>
    <alternativeName>
        <fullName>Cytochrome b-c1 complex subunit 3</fullName>
    </alternativeName>
    <alternativeName>
        <fullName>Ubiquinol-cytochrome-c reductase complex cytochrome b subunit</fullName>
    </alternativeName>
</protein>
<gene>
    <name type="primary">MT-CYB</name>
    <name type="synonym">COB</name>
    <name type="synonym">CYTB</name>
    <name type="synonym">MTCYB</name>
</gene>
<organism>
    <name type="scientific">Chaetodipus californicus</name>
    <name type="common">California pocket mouse</name>
    <name type="synonym">Perognathus californicus</name>
    <dbReference type="NCBI Taxonomy" id="145408"/>
    <lineage>
        <taxon>Eukaryota</taxon>
        <taxon>Metazoa</taxon>
        <taxon>Chordata</taxon>
        <taxon>Craniata</taxon>
        <taxon>Vertebrata</taxon>
        <taxon>Euteleostomi</taxon>
        <taxon>Mammalia</taxon>
        <taxon>Eutheria</taxon>
        <taxon>Euarchontoglires</taxon>
        <taxon>Glires</taxon>
        <taxon>Rodentia</taxon>
        <taxon>Castorimorpha</taxon>
        <taxon>Heteromyidae</taxon>
        <taxon>Perognathinae</taxon>
        <taxon>Chaetodipus</taxon>
    </lineage>
</organism>
<reference key="1">
    <citation type="journal article" date="2005" name="J. Mammal.">
        <title>Phylogenetics of the new world rodent family Heteromyidae.</title>
        <authorList>
            <person name="Alexander L.F."/>
            <person name="Riddle B.R."/>
        </authorList>
    </citation>
    <scope>NUCLEOTIDE SEQUENCE [GENOMIC DNA]</scope>
    <source>
        <strain>Isolate LVT 3682</strain>
    </source>
</reference>
<comment type="function">
    <text evidence="2">Component of the ubiquinol-cytochrome c reductase complex (complex III or cytochrome b-c1 complex) that is part of the mitochondrial respiratory chain. The b-c1 complex mediates electron transfer from ubiquinol to cytochrome c. Contributes to the generation of a proton gradient across the mitochondrial membrane that is then used for ATP synthesis.</text>
</comment>
<comment type="cofactor">
    <cofactor evidence="2">
        <name>heme b</name>
        <dbReference type="ChEBI" id="CHEBI:60344"/>
    </cofactor>
    <text evidence="2">Binds 2 heme b groups non-covalently.</text>
</comment>
<comment type="subunit">
    <text evidence="2">The cytochrome bc1 complex contains 11 subunits: 3 respiratory subunits (MT-CYB, CYC1 and UQCRFS1), 2 core proteins (UQCRC1 and UQCRC2) and 6 low-molecular weight proteins (UQCRH/QCR6, UQCRB/QCR7, UQCRQ/QCR8, UQCR10/QCR9, UQCR11/QCR10 and a cleavage product of UQCRFS1). This cytochrome bc1 complex then forms a dimer.</text>
</comment>
<comment type="subcellular location">
    <subcellularLocation>
        <location evidence="2">Mitochondrion inner membrane</location>
        <topology evidence="2">Multi-pass membrane protein</topology>
    </subcellularLocation>
</comment>
<comment type="miscellaneous">
    <text evidence="1">Heme 1 (or BL or b562) is low-potential and absorbs at about 562 nm, and heme 2 (or BH or b566) is high-potential and absorbs at about 566 nm.</text>
</comment>
<comment type="similarity">
    <text evidence="3 4">Belongs to the cytochrome b family.</text>
</comment>
<comment type="caution">
    <text evidence="2">The full-length protein contains only eight transmembrane helices, not nine as predicted by bioinformatics tools.</text>
</comment>
<proteinExistence type="inferred from homology"/>
<keyword id="KW-0249">Electron transport</keyword>
<keyword id="KW-0349">Heme</keyword>
<keyword id="KW-0408">Iron</keyword>
<keyword id="KW-0472">Membrane</keyword>
<keyword id="KW-0479">Metal-binding</keyword>
<keyword id="KW-0496">Mitochondrion</keyword>
<keyword id="KW-0999">Mitochondrion inner membrane</keyword>
<keyword id="KW-0679">Respiratory chain</keyword>
<keyword id="KW-0812">Transmembrane</keyword>
<keyword id="KW-1133">Transmembrane helix</keyword>
<keyword id="KW-0813">Transport</keyword>
<keyword id="KW-0830">Ubiquinone</keyword>
<accession>Q508K2</accession>
<feature type="chain" id="PRO_0000257880" description="Cytochrome b">
    <location>
        <begin position="1"/>
        <end position="379"/>
    </location>
</feature>
<feature type="transmembrane region" description="Helical" evidence="2">
    <location>
        <begin position="33"/>
        <end position="53"/>
    </location>
</feature>
<feature type="transmembrane region" description="Helical" evidence="2">
    <location>
        <begin position="77"/>
        <end position="98"/>
    </location>
</feature>
<feature type="transmembrane region" description="Helical" evidence="2">
    <location>
        <begin position="113"/>
        <end position="133"/>
    </location>
</feature>
<feature type="transmembrane region" description="Helical" evidence="2">
    <location>
        <begin position="178"/>
        <end position="198"/>
    </location>
</feature>
<feature type="transmembrane region" description="Helical" evidence="2">
    <location>
        <begin position="226"/>
        <end position="246"/>
    </location>
</feature>
<feature type="transmembrane region" description="Helical" evidence="2">
    <location>
        <begin position="288"/>
        <end position="308"/>
    </location>
</feature>
<feature type="transmembrane region" description="Helical" evidence="2">
    <location>
        <begin position="320"/>
        <end position="340"/>
    </location>
</feature>
<feature type="transmembrane region" description="Helical" evidence="2">
    <location>
        <begin position="347"/>
        <end position="367"/>
    </location>
</feature>
<feature type="binding site" description="axial binding residue" evidence="2">
    <location>
        <position position="83"/>
    </location>
    <ligand>
        <name>heme b</name>
        <dbReference type="ChEBI" id="CHEBI:60344"/>
        <label>b562</label>
    </ligand>
    <ligandPart>
        <name>Fe</name>
        <dbReference type="ChEBI" id="CHEBI:18248"/>
    </ligandPart>
</feature>
<feature type="binding site" description="axial binding residue" evidence="2">
    <location>
        <position position="97"/>
    </location>
    <ligand>
        <name>heme b</name>
        <dbReference type="ChEBI" id="CHEBI:60344"/>
        <label>b566</label>
    </ligand>
    <ligandPart>
        <name>Fe</name>
        <dbReference type="ChEBI" id="CHEBI:18248"/>
    </ligandPart>
</feature>
<feature type="binding site" description="axial binding residue" evidence="2">
    <location>
        <position position="182"/>
    </location>
    <ligand>
        <name>heme b</name>
        <dbReference type="ChEBI" id="CHEBI:60344"/>
        <label>b562</label>
    </ligand>
    <ligandPart>
        <name>Fe</name>
        <dbReference type="ChEBI" id="CHEBI:18248"/>
    </ligandPart>
</feature>
<feature type="binding site" description="axial binding residue" evidence="2">
    <location>
        <position position="196"/>
    </location>
    <ligand>
        <name>heme b</name>
        <dbReference type="ChEBI" id="CHEBI:60344"/>
        <label>b566</label>
    </ligand>
    <ligandPart>
        <name>Fe</name>
        <dbReference type="ChEBI" id="CHEBI:18248"/>
    </ligandPart>
</feature>
<feature type="binding site" evidence="2">
    <location>
        <position position="201"/>
    </location>
    <ligand>
        <name>a ubiquinone</name>
        <dbReference type="ChEBI" id="CHEBI:16389"/>
    </ligand>
</feature>
<dbReference type="EMBL" id="AY926401">
    <property type="protein sequence ID" value="AAY23244.1"/>
    <property type="molecule type" value="Genomic_DNA"/>
</dbReference>
<dbReference type="SMR" id="Q508K2"/>
<dbReference type="GO" id="GO:0005743">
    <property type="term" value="C:mitochondrial inner membrane"/>
    <property type="evidence" value="ECO:0007669"/>
    <property type="project" value="UniProtKB-SubCell"/>
</dbReference>
<dbReference type="GO" id="GO:0045275">
    <property type="term" value="C:respiratory chain complex III"/>
    <property type="evidence" value="ECO:0007669"/>
    <property type="project" value="InterPro"/>
</dbReference>
<dbReference type="GO" id="GO:0046872">
    <property type="term" value="F:metal ion binding"/>
    <property type="evidence" value="ECO:0007669"/>
    <property type="project" value="UniProtKB-KW"/>
</dbReference>
<dbReference type="GO" id="GO:0008121">
    <property type="term" value="F:ubiquinol-cytochrome-c reductase activity"/>
    <property type="evidence" value="ECO:0007669"/>
    <property type="project" value="InterPro"/>
</dbReference>
<dbReference type="GO" id="GO:0006122">
    <property type="term" value="P:mitochondrial electron transport, ubiquinol to cytochrome c"/>
    <property type="evidence" value="ECO:0007669"/>
    <property type="project" value="TreeGrafter"/>
</dbReference>
<dbReference type="CDD" id="cd00290">
    <property type="entry name" value="cytochrome_b_C"/>
    <property type="match status" value="1"/>
</dbReference>
<dbReference type="CDD" id="cd00284">
    <property type="entry name" value="Cytochrome_b_N"/>
    <property type="match status" value="1"/>
</dbReference>
<dbReference type="FunFam" id="1.20.810.10:FF:000002">
    <property type="entry name" value="Cytochrome b"/>
    <property type="match status" value="1"/>
</dbReference>
<dbReference type="Gene3D" id="1.20.810.10">
    <property type="entry name" value="Cytochrome Bc1 Complex, Chain C"/>
    <property type="match status" value="1"/>
</dbReference>
<dbReference type="InterPro" id="IPR005798">
    <property type="entry name" value="Cyt_b/b6_C"/>
</dbReference>
<dbReference type="InterPro" id="IPR036150">
    <property type="entry name" value="Cyt_b/b6_C_sf"/>
</dbReference>
<dbReference type="InterPro" id="IPR005797">
    <property type="entry name" value="Cyt_b/b6_N"/>
</dbReference>
<dbReference type="InterPro" id="IPR027387">
    <property type="entry name" value="Cytb/b6-like_sf"/>
</dbReference>
<dbReference type="InterPro" id="IPR030689">
    <property type="entry name" value="Cytochrome_b"/>
</dbReference>
<dbReference type="InterPro" id="IPR048260">
    <property type="entry name" value="Cytochrome_b_C_euk/bac"/>
</dbReference>
<dbReference type="InterPro" id="IPR048259">
    <property type="entry name" value="Cytochrome_b_N_euk/bac"/>
</dbReference>
<dbReference type="InterPro" id="IPR016174">
    <property type="entry name" value="Di-haem_cyt_TM"/>
</dbReference>
<dbReference type="PANTHER" id="PTHR19271">
    <property type="entry name" value="CYTOCHROME B"/>
    <property type="match status" value="1"/>
</dbReference>
<dbReference type="PANTHER" id="PTHR19271:SF16">
    <property type="entry name" value="CYTOCHROME B"/>
    <property type="match status" value="1"/>
</dbReference>
<dbReference type="Pfam" id="PF00032">
    <property type="entry name" value="Cytochrom_B_C"/>
    <property type="match status" value="1"/>
</dbReference>
<dbReference type="Pfam" id="PF00033">
    <property type="entry name" value="Cytochrome_B"/>
    <property type="match status" value="1"/>
</dbReference>
<dbReference type="PIRSF" id="PIRSF038885">
    <property type="entry name" value="COB"/>
    <property type="match status" value="1"/>
</dbReference>
<dbReference type="SUPFAM" id="SSF81648">
    <property type="entry name" value="a domain/subunit of cytochrome bc1 complex (Ubiquinol-cytochrome c reductase)"/>
    <property type="match status" value="1"/>
</dbReference>
<dbReference type="SUPFAM" id="SSF81342">
    <property type="entry name" value="Transmembrane di-heme cytochromes"/>
    <property type="match status" value="1"/>
</dbReference>
<dbReference type="PROSITE" id="PS51003">
    <property type="entry name" value="CYTB_CTER"/>
    <property type="match status" value="1"/>
</dbReference>
<dbReference type="PROSITE" id="PS51002">
    <property type="entry name" value="CYTB_NTER"/>
    <property type="match status" value="1"/>
</dbReference>
<evidence type="ECO:0000250" key="1"/>
<evidence type="ECO:0000250" key="2">
    <source>
        <dbReference type="UniProtKB" id="P00157"/>
    </source>
</evidence>
<evidence type="ECO:0000255" key="3">
    <source>
        <dbReference type="PROSITE-ProRule" id="PRU00967"/>
    </source>
</evidence>
<evidence type="ECO:0000255" key="4">
    <source>
        <dbReference type="PROSITE-ProRule" id="PRU00968"/>
    </source>
</evidence>
<name>CYB_CHACL</name>
<geneLocation type="mitochondrion"/>